<gene>
    <name type="ORF">SPAC3F10.08c</name>
</gene>
<evidence type="ECO:0000256" key="1">
    <source>
        <dbReference type="SAM" id="MobiDB-lite"/>
    </source>
</evidence>
<evidence type="ECO:0000269" key="2">
    <source>
    </source>
</evidence>
<sequence length="259" mass="29327">MSENALLALQRHFEDQFGHIEGLQPVSAKPSETAFNSDASEKEQSPTTSNEEEDAISDMEDKEDVSFGSKILRVSHQEVEKPTLSATVGRVSFLKKMPKLEDEEEILAKKREEQKLRKRSRQNDDGSDDDEVENLKNDLELQKLLRESHLLHEATSRTGQVQLVAEGKIRHKVVQQHIAQLGGKKETEKMPMAARRGMKKKQKHIEKVIENEARESGTVLAKKRKERKQFKKGFRPVTFSAPGKLVGGTLLLPKSMIPK</sequence>
<protein>
    <recommendedName>
        <fullName>Uncharacterized protein C3F10.08c</fullName>
    </recommendedName>
</protein>
<organism>
    <name type="scientific">Schizosaccharomyces pombe (strain 972 / ATCC 24843)</name>
    <name type="common">Fission yeast</name>
    <dbReference type="NCBI Taxonomy" id="284812"/>
    <lineage>
        <taxon>Eukaryota</taxon>
        <taxon>Fungi</taxon>
        <taxon>Dikarya</taxon>
        <taxon>Ascomycota</taxon>
        <taxon>Taphrinomycotina</taxon>
        <taxon>Schizosaccharomycetes</taxon>
        <taxon>Schizosaccharomycetales</taxon>
        <taxon>Schizosaccharomycetaceae</taxon>
        <taxon>Schizosaccharomyces</taxon>
    </lineage>
</organism>
<reference key="1">
    <citation type="journal article" date="2002" name="Nature">
        <title>The genome sequence of Schizosaccharomyces pombe.</title>
        <authorList>
            <person name="Wood V."/>
            <person name="Gwilliam R."/>
            <person name="Rajandream M.A."/>
            <person name="Lyne M.H."/>
            <person name="Lyne R."/>
            <person name="Stewart A."/>
            <person name="Sgouros J.G."/>
            <person name="Peat N."/>
            <person name="Hayles J."/>
            <person name="Baker S.G."/>
            <person name="Basham D."/>
            <person name="Bowman S."/>
            <person name="Brooks K."/>
            <person name="Brown D."/>
            <person name="Brown S."/>
            <person name="Chillingworth T."/>
            <person name="Churcher C.M."/>
            <person name="Collins M."/>
            <person name="Connor R."/>
            <person name="Cronin A."/>
            <person name="Davis P."/>
            <person name="Feltwell T."/>
            <person name="Fraser A."/>
            <person name="Gentles S."/>
            <person name="Goble A."/>
            <person name="Hamlin N."/>
            <person name="Harris D.E."/>
            <person name="Hidalgo J."/>
            <person name="Hodgson G."/>
            <person name="Holroyd S."/>
            <person name="Hornsby T."/>
            <person name="Howarth S."/>
            <person name="Huckle E.J."/>
            <person name="Hunt S."/>
            <person name="Jagels K."/>
            <person name="James K.D."/>
            <person name="Jones L."/>
            <person name="Jones M."/>
            <person name="Leather S."/>
            <person name="McDonald S."/>
            <person name="McLean J."/>
            <person name="Mooney P."/>
            <person name="Moule S."/>
            <person name="Mungall K.L."/>
            <person name="Murphy L.D."/>
            <person name="Niblett D."/>
            <person name="Odell C."/>
            <person name="Oliver K."/>
            <person name="O'Neil S."/>
            <person name="Pearson D."/>
            <person name="Quail M.A."/>
            <person name="Rabbinowitsch E."/>
            <person name="Rutherford K.M."/>
            <person name="Rutter S."/>
            <person name="Saunders D."/>
            <person name="Seeger K."/>
            <person name="Sharp S."/>
            <person name="Skelton J."/>
            <person name="Simmonds M.N."/>
            <person name="Squares R."/>
            <person name="Squares S."/>
            <person name="Stevens K."/>
            <person name="Taylor K."/>
            <person name="Taylor R.G."/>
            <person name="Tivey A."/>
            <person name="Walsh S.V."/>
            <person name="Warren T."/>
            <person name="Whitehead S."/>
            <person name="Woodward J.R."/>
            <person name="Volckaert G."/>
            <person name="Aert R."/>
            <person name="Robben J."/>
            <person name="Grymonprez B."/>
            <person name="Weltjens I."/>
            <person name="Vanstreels E."/>
            <person name="Rieger M."/>
            <person name="Schaefer M."/>
            <person name="Mueller-Auer S."/>
            <person name="Gabel C."/>
            <person name="Fuchs M."/>
            <person name="Duesterhoeft A."/>
            <person name="Fritzc C."/>
            <person name="Holzer E."/>
            <person name="Moestl D."/>
            <person name="Hilbert H."/>
            <person name="Borzym K."/>
            <person name="Langer I."/>
            <person name="Beck A."/>
            <person name="Lehrach H."/>
            <person name="Reinhardt R."/>
            <person name="Pohl T.M."/>
            <person name="Eger P."/>
            <person name="Zimmermann W."/>
            <person name="Wedler H."/>
            <person name="Wambutt R."/>
            <person name="Purnelle B."/>
            <person name="Goffeau A."/>
            <person name="Cadieu E."/>
            <person name="Dreano S."/>
            <person name="Gloux S."/>
            <person name="Lelaure V."/>
            <person name="Mottier S."/>
            <person name="Galibert F."/>
            <person name="Aves S.J."/>
            <person name="Xiang Z."/>
            <person name="Hunt C."/>
            <person name="Moore K."/>
            <person name="Hurst S.M."/>
            <person name="Lucas M."/>
            <person name="Rochet M."/>
            <person name="Gaillardin C."/>
            <person name="Tallada V.A."/>
            <person name="Garzon A."/>
            <person name="Thode G."/>
            <person name="Daga R.R."/>
            <person name="Cruzado L."/>
            <person name="Jimenez J."/>
            <person name="Sanchez M."/>
            <person name="del Rey F."/>
            <person name="Benito J."/>
            <person name="Dominguez A."/>
            <person name="Revuelta J.L."/>
            <person name="Moreno S."/>
            <person name="Armstrong J."/>
            <person name="Forsburg S.L."/>
            <person name="Cerutti L."/>
            <person name="Lowe T."/>
            <person name="McCombie W.R."/>
            <person name="Paulsen I."/>
            <person name="Potashkin J."/>
            <person name="Shpakovski G.V."/>
            <person name="Ussery D."/>
            <person name="Barrell B.G."/>
            <person name="Nurse P."/>
        </authorList>
    </citation>
    <scope>NUCLEOTIDE SEQUENCE [LARGE SCALE GENOMIC DNA]</scope>
    <source>
        <strain>972 / ATCC 24843</strain>
    </source>
</reference>
<reference key="2">
    <citation type="journal article" date="2008" name="J. Proteome Res.">
        <title>Phosphoproteome analysis of fission yeast.</title>
        <authorList>
            <person name="Wilson-Grady J.T."/>
            <person name="Villen J."/>
            <person name="Gygi S.P."/>
        </authorList>
    </citation>
    <scope>PHOSPHORYLATION [LARGE SCALE ANALYSIS] AT SER-127</scope>
    <scope>IDENTIFICATION BY MASS SPECTROMETRY</scope>
</reference>
<dbReference type="EMBL" id="CU329670">
    <property type="protein sequence ID" value="CAA93306.1"/>
    <property type="molecule type" value="Genomic_DNA"/>
</dbReference>
<dbReference type="PIR" id="T38709">
    <property type="entry name" value="T38709"/>
</dbReference>
<dbReference type="SMR" id="Q10183"/>
<dbReference type="BioGRID" id="279625">
    <property type="interactions" value="2"/>
</dbReference>
<dbReference type="FunCoup" id="Q10183">
    <property type="interactions" value="87"/>
</dbReference>
<dbReference type="STRING" id="284812.Q10183"/>
<dbReference type="iPTMnet" id="Q10183"/>
<dbReference type="PaxDb" id="4896-SPAC3F10.08c.1"/>
<dbReference type="EnsemblFungi" id="SPAC3F10.08c.1">
    <property type="protein sequence ID" value="SPAC3F10.08c.1:pep"/>
    <property type="gene ID" value="SPAC3F10.08c"/>
</dbReference>
<dbReference type="KEGG" id="spo:2543196"/>
<dbReference type="PomBase" id="SPAC3F10.08c"/>
<dbReference type="VEuPathDB" id="FungiDB:SPAC3F10.08c"/>
<dbReference type="eggNOG" id="ENOG502QVP1">
    <property type="taxonomic scope" value="Eukaryota"/>
</dbReference>
<dbReference type="HOGENOM" id="CLU_1090531_0_0_1"/>
<dbReference type="InParanoid" id="Q10183"/>
<dbReference type="OMA" id="EKEQKMP"/>
<dbReference type="PhylomeDB" id="Q10183"/>
<dbReference type="PRO" id="PR:Q10183"/>
<dbReference type="Proteomes" id="UP000002485">
    <property type="component" value="Chromosome I"/>
</dbReference>
<dbReference type="GO" id="GO:0005737">
    <property type="term" value="C:cytoplasm"/>
    <property type="evidence" value="ECO:0000266"/>
    <property type="project" value="PomBase"/>
</dbReference>
<dbReference type="GO" id="GO:0005730">
    <property type="term" value="C:nucleolus"/>
    <property type="evidence" value="ECO:0007005"/>
    <property type="project" value="PomBase"/>
</dbReference>
<dbReference type="GO" id="GO:0005634">
    <property type="term" value="C:nucleus"/>
    <property type="evidence" value="ECO:0007005"/>
    <property type="project" value="PomBase"/>
</dbReference>
<dbReference type="GO" id="GO:0000462">
    <property type="term" value="P:maturation of SSU-rRNA from tricistronic rRNA transcript (SSU-rRNA, 5.8S rRNA, LSU-rRNA)"/>
    <property type="evidence" value="ECO:0000318"/>
    <property type="project" value="GO_Central"/>
</dbReference>
<dbReference type="InterPro" id="IPR027973">
    <property type="entry name" value="FSAF1-like"/>
</dbReference>
<dbReference type="InterPro" id="IPR053030">
    <property type="entry name" value="Ribosomal_biogenesis_FAF1-like"/>
</dbReference>
<dbReference type="PANTHER" id="PTHR28096">
    <property type="entry name" value="PROTEIN FAF1"/>
    <property type="match status" value="1"/>
</dbReference>
<dbReference type="PANTHER" id="PTHR28096:SF1">
    <property type="entry name" value="PROTEIN FAF1"/>
    <property type="match status" value="1"/>
</dbReference>
<dbReference type="Pfam" id="PF15375">
    <property type="entry name" value="FSAF1"/>
    <property type="match status" value="1"/>
</dbReference>
<accession>Q10183</accession>
<feature type="chain" id="PRO_0000116479" description="Uncharacterized protein C3F10.08c">
    <location>
        <begin position="1"/>
        <end position="259"/>
    </location>
</feature>
<feature type="region of interest" description="Disordered" evidence="1">
    <location>
        <begin position="22"/>
        <end position="68"/>
    </location>
</feature>
<feature type="region of interest" description="Disordered" evidence="1">
    <location>
        <begin position="111"/>
        <end position="133"/>
    </location>
</feature>
<feature type="region of interest" description="Disordered" evidence="1">
    <location>
        <begin position="181"/>
        <end position="202"/>
    </location>
</feature>
<feature type="compositionally biased region" description="Acidic residues" evidence="1">
    <location>
        <begin position="50"/>
        <end position="63"/>
    </location>
</feature>
<feature type="modified residue" description="Phosphoserine" evidence="2">
    <location>
        <position position="127"/>
    </location>
</feature>
<name>YAW8_SCHPO</name>
<proteinExistence type="evidence at protein level"/>
<keyword id="KW-0597">Phosphoprotein</keyword>
<keyword id="KW-1185">Reference proteome</keyword>